<proteinExistence type="inferred from homology"/>
<organism>
    <name type="scientific">Salmonella typhimurium (strain LT2 / SGSC1412 / ATCC 700720)</name>
    <dbReference type="NCBI Taxonomy" id="99287"/>
    <lineage>
        <taxon>Bacteria</taxon>
        <taxon>Pseudomonadati</taxon>
        <taxon>Pseudomonadota</taxon>
        <taxon>Gammaproteobacteria</taxon>
        <taxon>Enterobacterales</taxon>
        <taxon>Enterobacteriaceae</taxon>
        <taxon>Salmonella</taxon>
    </lineage>
</organism>
<sequence length="131" mass="15173">MRHYEIVFMVHPDQSEQVPGMIERYSAAITGAEGKIHRLEDWGRRQLAYPINKLHKAHYVLMNVEAPQEVIDELETTFRFNDAVIRSMVMRTKHAVTEASPMVKAKDERRERRDDFANETADDAEAGDSEE</sequence>
<reference key="1">
    <citation type="journal article" date="2001" name="Nature">
        <title>Complete genome sequence of Salmonella enterica serovar Typhimurium LT2.</title>
        <authorList>
            <person name="McClelland M."/>
            <person name="Sanderson K.E."/>
            <person name="Spieth J."/>
            <person name="Clifton S.W."/>
            <person name="Latreille P."/>
            <person name="Courtney L."/>
            <person name="Porwollik S."/>
            <person name="Ali J."/>
            <person name="Dante M."/>
            <person name="Du F."/>
            <person name="Hou S."/>
            <person name="Layman D."/>
            <person name="Leonard S."/>
            <person name="Nguyen C."/>
            <person name="Scott K."/>
            <person name="Holmes A."/>
            <person name="Grewal N."/>
            <person name="Mulvaney E."/>
            <person name="Ryan E."/>
            <person name="Sun H."/>
            <person name="Florea L."/>
            <person name="Miller W."/>
            <person name="Stoneking T."/>
            <person name="Nhan M."/>
            <person name="Waterston R."/>
            <person name="Wilson R.K."/>
        </authorList>
    </citation>
    <scope>NUCLEOTIDE SEQUENCE [LARGE SCALE GENOMIC DNA]</scope>
    <source>
        <strain>LT2 / SGSC1412 / ATCC 700720</strain>
    </source>
</reference>
<name>RS6_SALTY</name>
<keyword id="KW-1185">Reference proteome</keyword>
<keyword id="KW-0687">Ribonucleoprotein</keyword>
<keyword id="KW-0689">Ribosomal protein</keyword>
<keyword id="KW-0694">RNA-binding</keyword>
<keyword id="KW-0699">rRNA-binding</keyword>
<comment type="function">
    <text evidence="1">Binds together with bS18 to 16S ribosomal RNA.</text>
</comment>
<comment type="similarity">
    <text evidence="1">Belongs to the bacterial ribosomal protein bS6 family.</text>
</comment>
<accession>P66593</accession>
<accession>Q8XG88</accession>
<gene>
    <name evidence="1" type="primary">rpsF</name>
    <name type="ordered locus">STM4391</name>
</gene>
<protein>
    <recommendedName>
        <fullName evidence="1">Small ribosomal subunit protein bS6</fullName>
    </recommendedName>
    <alternativeName>
        <fullName evidence="3">30S ribosomal protein S6</fullName>
    </alternativeName>
</protein>
<evidence type="ECO:0000255" key="1">
    <source>
        <dbReference type="HAMAP-Rule" id="MF_00360"/>
    </source>
</evidence>
<evidence type="ECO:0000256" key="2">
    <source>
        <dbReference type="SAM" id="MobiDB-lite"/>
    </source>
</evidence>
<evidence type="ECO:0000305" key="3"/>
<feature type="chain" id="PRO_0000176832" description="Small ribosomal subunit protein bS6">
    <location>
        <begin position="1"/>
        <end position="131"/>
    </location>
</feature>
<feature type="region of interest" description="Disordered" evidence="2">
    <location>
        <begin position="98"/>
        <end position="131"/>
    </location>
</feature>
<feature type="compositionally biased region" description="Basic and acidic residues" evidence="2">
    <location>
        <begin position="104"/>
        <end position="116"/>
    </location>
</feature>
<feature type="compositionally biased region" description="Acidic residues" evidence="2">
    <location>
        <begin position="120"/>
        <end position="131"/>
    </location>
</feature>
<dbReference type="EMBL" id="AE006468">
    <property type="protein sequence ID" value="AAL23211.1"/>
    <property type="molecule type" value="Genomic_DNA"/>
</dbReference>
<dbReference type="RefSeq" id="NP_463252.1">
    <property type="nucleotide sequence ID" value="NC_003197.2"/>
</dbReference>
<dbReference type="RefSeq" id="WP_001216673.1">
    <property type="nucleotide sequence ID" value="NC_003197.2"/>
</dbReference>
<dbReference type="SMR" id="P66593"/>
<dbReference type="STRING" id="99287.STM4391"/>
<dbReference type="PaxDb" id="99287-STM4391"/>
<dbReference type="GeneID" id="1255917"/>
<dbReference type="GeneID" id="92804768"/>
<dbReference type="KEGG" id="stm:STM4391"/>
<dbReference type="PATRIC" id="fig|99287.12.peg.4616"/>
<dbReference type="HOGENOM" id="CLU_113441_6_1_6"/>
<dbReference type="OMA" id="AYPIQHK"/>
<dbReference type="PhylomeDB" id="P66593"/>
<dbReference type="BioCyc" id="SENT99287:STM4391-MONOMER"/>
<dbReference type="PRO" id="PR:P66593"/>
<dbReference type="Proteomes" id="UP000001014">
    <property type="component" value="Chromosome"/>
</dbReference>
<dbReference type="GO" id="GO:0022627">
    <property type="term" value="C:cytosolic small ribosomal subunit"/>
    <property type="evidence" value="ECO:0000318"/>
    <property type="project" value="GO_Central"/>
</dbReference>
<dbReference type="GO" id="GO:0070181">
    <property type="term" value="F:small ribosomal subunit rRNA binding"/>
    <property type="evidence" value="ECO:0000318"/>
    <property type="project" value="GO_Central"/>
</dbReference>
<dbReference type="GO" id="GO:0003735">
    <property type="term" value="F:structural constituent of ribosome"/>
    <property type="evidence" value="ECO:0000318"/>
    <property type="project" value="GO_Central"/>
</dbReference>
<dbReference type="GO" id="GO:0006412">
    <property type="term" value="P:translation"/>
    <property type="evidence" value="ECO:0007669"/>
    <property type="project" value="UniProtKB-UniRule"/>
</dbReference>
<dbReference type="CDD" id="cd00473">
    <property type="entry name" value="bS6"/>
    <property type="match status" value="1"/>
</dbReference>
<dbReference type="FunFam" id="3.30.70.60:FF:000003">
    <property type="entry name" value="30S ribosomal protein S6"/>
    <property type="match status" value="1"/>
</dbReference>
<dbReference type="Gene3D" id="3.30.70.60">
    <property type="match status" value="1"/>
</dbReference>
<dbReference type="HAMAP" id="MF_00360">
    <property type="entry name" value="Ribosomal_bS6"/>
    <property type="match status" value="1"/>
</dbReference>
<dbReference type="InterPro" id="IPR000529">
    <property type="entry name" value="Ribosomal_bS6"/>
</dbReference>
<dbReference type="InterPro" id="IPR020815">
    <property type="entry name" value="Ribosomal_bS6_CS"/>
</dbReference>
<dbReference type="InterPro" id="IPR035980">
    <property type="entry name" value="Ribosomal_bS6_sf"/>
</dbReference>
<dbReference type="InterPro" id="IPR020814">
    <property type="entry name" value="Ribosomal_S6_plastid/chlpt"/>
</dbReference>
<dbReference type="InterPro" id="IPR014717">
    <property type="entry name" value="Transl_elong_EF1B/ribsomal_bS6"/>
</dbReference>
<dbReference type="NCBIfam" id="TIGR00166">
    <property type="entry name" value="S6"/>
    <property type="match status" value="1"/>
</dbReference>
<dbReference type="PANTHER" id="PTHR21011">
    <property type="entry name" value="MITOCHONDRIAL 28S RIBOSOMAL PROTEIN S6"/>
    <property type="match status" value="1"/>
</dbReference>
<dbReference type="PANTHER" id="PTHR21011:SF1">
    <property type="entry name" value="SMALL RIBOSOMAL SUBUNIT PROTEIN BS6M"/>
    <property type="match status" value="1"/>
</dbReference>
<dbReference type="Pfam" id="PF01250">
    <property type="entry name" value="Ribosomal_S6"/>
    <property type="match status" value="1"/>
</dbReference>
<dbReference type="SUPFAM" id="SSF54995">
    <property type="entry name" value="Ribosomal protein S6"/>
    <property type="match status" value="1"/>
</dbReference>
<dbReference type="PROSITE" id="PS01048">
    <property type="entry name" value="RIBOSOMAL_S6"/>
    <property type="match status" value="1"/>
</dbReference>